<keyword id="KW-0158">Chromosome</keyword>
<keyword id="KW-0539">Nucleus</keyword>
<keyword id="KW-1185">Reference proteome</keyword>
<keyword id="KW-0694">RNA-binding</keyword>
<protein>
    <recommendedName>
        <fullName>Nucleolar protein 6</fullName>
    </recommendedName>
</protein>
<name>NOL6_XENLA</name>
<organism>
    <name type="scientific">Xenopus laevis</name>
    <name type="common">African clawed frog</name>
    <dbReference type="NCBI Taxonomy" id="8355"/>
    <lineage>
        <taxon>Eukaryota</taxon>
        <taxon>Metazoa</taxon>
        <taxon>Chordata</taxon>
        <taxon>Craniata</taxon>
        <taxon>Vertebrata</taxon>
        <taxon>Euteleostomi</taxon>
        <taxon>Amphibia</taxon>
        <taxon>Batrachia</taxon>
        <taxon>Anura</taxon>
        <taxon>Pipoidea</taxon>
        <taxon>Pipidae</taxon>
        <taxon>Xenopodinae</taxon>
        <taxon>Xenopus</taxon>
        <taxon>Xenopus</taxon>
    </lineage>
</organism>
<accession>Q6NRY2</accession>
<dbReference type="EMBL" id="BC070577">
    <property type="protein sequence ID" value="AAH70577.1"/>
    <property type="status" value="ALT_INIT"/>
    <property type="molecule type" value="mRNA"/>
</dbReference>
<dbReference type="RefSeq" id="NP_001084843.1">
    <property type="nucleotide sequence ID" value="NM_001091374.1"/>
</dbReference>
<dbReference type="SMR" id="Q6NRY2"/>
<dbReference type="DNASU" id="431889"/>
<dbReference type="GeneID" id="431889"/>
<dbReference type="KEGG" id="xla:431889"/>
<dbReference type="AGR" id="Xenbase:XB-GENE-994699"/>
<dbReference type="CTD" id="431889"/>
<dbReference type="Xenbase" id="XB-GENE-994699">
    <property type="gene designation" value="nol6.L"/>
</dbReference>
<dbReference type="OrthoDB" id="10251401at2759"/>
<dbReference type="Proteomes" id="UP000186698">
    <property type="component" value="Chromosome 1L"/>
</dbReference>
<dbReference type="Bgee" id="431889">
    <property type="expression patterns" value="Expressed in testis and 19 other cell types or tissues"/>
</dbReference>
<dbReference type="GO" id="GO:0005694">
    <property type="term" value="C:chromosome"/>
    <property type="evidence" value="ECO:0007669"/>
    <property type="project" value="UniProtKB-SubCell"/>
</dbReference>
<dbReference type="GO" id="GO:0032545">
    <property type="term" value="C:CURI complex"/>
    <property type="evidence" value="ECO:0000318"/>
    <property type="project" value="GO_Central"/>
</dbReference>
<dbReference type="GO" id="GO:0032040">
    <property type="term" value="C:small-subunit processome"/>
    <property type="evidence" value="ECO:0000250"/>
    <property type="project" value="UniProtKB"/>
</dbReference>
<dbReference type="GO" id="GO:0034456">
    <property type="term" value="C:UTP-C complex"/>
    <property type="evidence" value="ECO:0000318"/>
    <property type="project" value="GO_Central"/>
</dbReference>
<dbReference type="GO" id="GO:0003723">
    <property type="term" value="F:RNA binding"/>
    <property type="evidence" value="ECO:0007669"/>
    <property type="project" value="UniProtKB-KW"/>
</dbReference>
<dbReference type="GO" id="GO:0042274">
    <property type="term" value="P:ribosomal small subunit biogenesis"/>
    <property type="evidence" value="ECO:0000250"/>
    <property type="project" value="UniProtKB"/>
</dbReference>
<dbReference type="GO" id="GO:0006364">
    <property type="term" value="P:rRNA processing"/>
    <property type="evidence" value="ECO:0000318"/>
    <property type="project" value="GO_Central"/>
</dbReference>
<dbReference type="GO" id="GO:0006409">
    <property type="term" value="P:tRNA export from nucleus"/>
    <property type="evidence" value="ECO:0000318"/>
    <property type="project" value="GO_Central"/>
</dbReference>
<dbReference type="FunFam" id="1.10.1410.10:FF:000005">
    <property type="entry name" value="Nucleolar protein 6"/>
    <property type="match status" value="1"/>
</dbReference>
<dbReference type="FunFam" id="1.10.1410.10:FF:000006">
    <property type="entry name" value="Nucleolar protein 6"/>
    <property type="match status" value="1"/>
</dbReference>
<dbReference type="FunFam" id="3.30.70.3030:FF:000001">
    <property type="entry name" value="Nucleolar protein 6"/>
    <property type="match status" value="1"/>
</dbReference>
<dbReference type="Gene3D" id="1.10.1410.10">
    <property type="match status" value="2"/>
</dbReference>
<dbReference type="Gene3D" id="3.30.70.3030">
    <property type="match status" value="1"/>
</dbReference>
<dbReference type="InterPro" id="IPR005554">
    <property type="entry name" value="NOL6/Upt22"/>
</dbReference>
<dbReference type="InterPro" id="IPR035082">
    <property type="entry name" value="Nrap_D1"/>
</dbReference>
<dbReference type="InterPro" id="IPR035367">
    <property type="entry name" value="Nrap_D2"/>
</dbReference>
<dbReference type="InterPro" id="IPR035368">
    <property type="entry name" value="Nrap_D3"/>
</dbReference>
<dbReference type="InterPro" id="IPR035369">
    <property type="entry name" value="Nrap_D4"/>
</dbReference>
<dbReference type="InterPro" id="IPR035370">
    <property type="entry name" value="Nrap_D5"/>
</dbReference>
<dbReference type="InterPro" id="IPR035371">
    <property type="entry name" value="Nrap_D6"/>
</dbReference>
<dbReference type="PANTHER" id="PTHR17972:SF0">
    <property type="entry name" value="NUCLEOLAR PROTEIN 6"/>
    <property type="match status" value="1"/>
</dbReference>
<dbReference type="PANTHER" id="PTHR17972">
    <property type="entry name" value="NUCLEOLAR RNA-ASSOCIATED PROTEIN"/>
    <property type="match status" value="1"/>
</dbReference>
<dbReference type="Pfam" id="PF03813">
    <property type="entry name" value="Nrap"/>
    <property type="match status" value="1"/>
</dbReference>
<dbReference type="Pfam" id="PF17403">
    <property type="entry name" value="Nrap_D2"/>
    <property type="match status" value="1"/>
</dbReference>
<dbReference type="Pfam" id="PF17404">
    <property type="entry name" value="Nrap_D3"/>
    <property type="match status" value="1"/>
</dbReference>
<dbReference type="Pfam" id="PF17405">
    <property type="entry name" value="Nrap_D4"/>
    <property type="match status" value="1"/>
</dbReference>
<dbReference type="Pfam" id="PF17406">
    <property type="entry name" value="Nrap_D5"/>
    <property type="match status" value="1"/>
</dbReference>
<dbReference type="Pfam" id="PF17407">
    <property type="entry name" value="Nrap_D6"/>
    <property type="match status" value="1"/>
</dbReference>
<proteinExistence type="evidence at transcript level"/>
<gene>
    <name type="primary">nol6</name>
</gene>
<feature type="chain" id="PRO_0000215649" description="Nucleolar protein 6">
    <location>
        <begin position="1"/>
        <end position="1147"/>
    </location>
</feature>
<feature type="region of interest" description="Disordered" evidence="3">
    <location>
        <begin position="1"/>
        <end position="49"/>
    </location>
</feature>
<feature type="compositionally biased region" description="Acidic residues" evidence="3">
    <location>
        <begin position="15"/>
        <end position="24"/>
    </location>
</feature>
<sequence>MQKKRSRAGAAEQEAASDDGEMSDSSDKMEVSQNKGKSGIKRAPEADDVLRPVKLSKSDLYKPPTNDELNRLKETENLFHTNLLRMQIEELLQEVKLKEKRRKTIDGFLHEINALLGTIPETPKTDLTDQSWLSSSIKVPFLQVPYQVKGKFSFLPPSSIKVVGSYLLGTCIKPEINVDLAVTMPQEILQVKDNLNQRYSRKRALYLAHIASHLTDNKLFSSVKFTYMNSNHLKPILLLRPQGKDEKLVTVRIHICPPPGFFKLSRLYPNKNNVRTSWYTEQQTETEGVCDPPTPYYNNTILSDLTLEHHLHHLTNCATDFPGMKDAIALLKVWLHQRQLDKGFGCFNGFLASMLISYLLSKNKINKVMSGYQVLRNTLQFLATTDLTVNGITMATCSDSSLPSLPDFHEAFQVVFVDPMGVVNLCADMTASKYRQIQFEASESLKVLDDTNVNGFHLLLMVPKPFVRTFDHVFHLTNVAKLQGTCKKMKLLNQLIDRGGDYLATALPYLLSVLSKGLGPRVSLLSHTLTHKPEWNVGEEPAKHKDSGLVTVGLLLDPELYTNVLDKGPAADSSEALDFRAFWGEKSELRRFQDGSICEAVVWTGGSLYDKRKVPELIVKYLLELHANIPESCINYTGNALDCVLSRGRETSTEEEKMVSIIQSYDDLSRKLWNLNDLPLTITSVQGTHPCLRYTDVFPPLPVKPDWSSYHLLREKKCLIPNPEKPCPAYVSPVKVICHMEGSGKWPQDKDAIKRLKAAFQIRLSELLSSQHQLLCNPSATHTDVYKDGYVFRVQVAYHREPQYMKEFVTPEGMLKYQDTEESMQLEMETNHLPHLSSTLHGLHQQHPAFGGTSRLAKRWIQSQLLGDSFSEECLDLLVAHLFLHPAPYSPPSSALVGFLRFLHLVATFDWKNSPLIVNLNGELKGSEYTEIQNDFISARAQLPVMFIATPKDKKDSVWTKNQPTAQMLQRLIVLCLESLRALEQQLMDPRGNHDYKMIFRPPLDLYDVLIRLNPKQISRHREAVDQPAKSFFRGMLKEGAQVKDLMFPVVGYDPIQLFLQELREAYGEFALFFHDLHGGDVIGVLWKPSSFEPQPFKTTNVKGRQMDGKSDKALLVPNAEAFVEDLEILGEGLVAGVEAQTERWNI</sequence>
<comment type="function">
    <text evidence="2">Part of the small subunit (SSU) processome, first precursor of the small eukaryotic ribosomal subunit. During the assembly of the SSU processome in the nucleolus, many ribosome biogenesis factors, an RNA chaperone and ribosomal proteins associate with the nascent pre-rRNA and work in concert to generate RNA folding, modifications, rearrangements and cleavage as well as targeted degradation of pre-ribosomal RNA by the RNA exosome.</text>
</comment>
<comment type="subunit">
    <text evidence="2">Part of the small subunit (SSU) processome, composed of more than 70 proteins and the RNA chaperone small nucleolar RNA (snoRNA) U3.</text>
</comment>
<comment type="subcellular location">
    <subcellularLocation>
        <location evidence="2">Nucleus</location>
        <location evidence="2">Nucleolus</location>
    </subcellularLocation>
    <subcellularLocation>
        <location evidence="1">Chromosome</location>
    </subcellularLocation>
    <text evidence="1">Localizes to condensed chromosomes in mitosis.</text>
</comment>
<comment type="similarity">
    <text evidence="4">Belongs to the NRAP family.</text>
</comment>
<comment type="sequence caution" evidence="4">
    <conflict type="erroneous initiation">
        <sequence resource="EMBL-CDS" id="AAH70577"/>
    </conflict>
    <text>Truncated N-terminus.</text>
</comment>
<reference key="1">
    <citation type="submission" date="2004-05" db="EMBL/GenBank/DDBJ databases">
        <authorList>
            <consortium name="NIH - Xenopus Gene Collection (XGC) project"/>
        </authorList>
    </citation>
    <scope>NUCLEOTIDE SEQUENCE [LARGE SCALE MRNA]</scope>
    <source>
        <tissue>Ovary</tissue>
    </source>
</reference>
<evidence type="ECO:0000250" key="1">
    <source>
        <dbReference type="UniProtKB" id="Q8R5K4"/>
    </source>
</evidence>
<evidence type="ECO:0000250" key="2">
    <source>
        <dbReference type="UniProtKB" id="Q9H6R4"/>
    </source>
</evidence>
<evidence type="ECO:0000256" key="3">
    <source>
        <dbReference type="SAM" id="MobiDB-lite"/>
    </source>
</evidence>
<evidence type="ECO:0000305" key="4"/>